<proteinExistence type="inferred from homology"/>
<evidence type="ECO:0000255" key="1">
    <source>
        <dbReference type="HAMAP-Rule" id="MF_00379"/>
    </source>
</evidence>
<dbReference type="EC" id="3.6.-.-" evidence="1"/>
<dbReference type="EMBL" id="AE014074">
    <property type="protein sequence ID" value="AAM79359.1"/>
    <property type="molecule type" value="Genomic_DNA"/>
</dbReference>
<dbReference type="RefSeq" id="WP_011054462.1">
    <property type="nucleotide sequence ID" value="NC_004070.1"/>
</dbReference>
<dbReference type="SMR" id="P0DG22"/>
<dbReference type="KEGG" id="spg:SpyM3_0752"/>
<dbReference type="HOGENOM" id="CLU_019624_4_1_9"/>
<dbReference type="Proteomes" id="UP000000564">
    <property type="component" value="Chromosome"/>
</dbReference>
<dbReference type="GO" id="GO:0005829">
    <property type="term" value="C:cytosol"/>
    <property type="evidence" value="ECO:0007669"/>
    <property type="project" value="TreeGrafter"/>
</dbReference>
<dbReference type="GO" id="GO:0005525">
    <property type="term" value="F:GTP binding"/>
    <property type="evidence" value="ECO:0007669"/>
    <property type="project" value="UniProtKB-UniRule"/>
</dbReference>
<dbReference type="GO" id="GO:0003924">
    <property type="term" value="F:GTPase activity"/>
    <property type="evidence" value="ECO:0007669"/>
    <property type="project" value="UniProtKB-UniRule"/>
</dbReference>
<dbReference type="GO" id="GO:0046872">
    <property type="term" value="F:metal ion binding"/>
    <property type="evidence" value="ECO:0007669"/>
    <property type="project" value="UniProtKB-KW"/>
</dbReference>
<dbReference type="GO" id="GO:0030488">
    <property type="term" value="P:tRNA methylation"/>
    <property type="evidence" value="ECO:0007669"/>
    <property type="project" value="TreeGrafter"/>
</dbReference>
<dbReference type="GO" id="GO:0002098">
    <property type="term" value="P:tRNA wobble uridine modification"/>
    <property type="evidence" value="ECO:0007669"/>
    <property type="project" value="TreeGrafter"/>
</dbReference>
<dbReference type="CDD" id="cd04164">
    <property type="entry name" value="trmE"/>
    <property type="match status" value="1"/>
</dbReference>
<dbReference type="CDD" id="cd14858">
    <property type="entry name" value="TrmE_N"/>
    <property type="match status" value="1"/>
</dbReference>
<dbReference type="FunFam" id="3.30.1360.120:FF:000003">
    <property type="entry name" value="tRNA modification GTPase MnmE"/>
    <property type="match status" value="1"/>
</dbReference>
<dbReference type="FunFam" id="3.40.50.300:FF:000494">
    <property type="entry name" value="tRNA modification GTPase MnmE"/>
    <property type="match status" value="1"/>
</dbReference>
<dbReference type="Gene3D" id="3.40.50.300">
    <property type="entry name" value="P-loop containing nucleotide triphosphate hydrolases"/>
    <property type="match status" value="1"/>
</dbReference>
<dbReference type="Gene3D" id="3.30.1360.120">
    <property type="entry name" value="Probable tRNA modification gtpase trme, domain 1"/>
    <property type="match status" value="1"/>
</dbReference>
<dbReference type="Gene3D" id="1.20.120.430">
    <property type="entry name" value="tRNA modification GTPase MnmE domain 2"/>
    <property type="match status" value="1"/>
</dbReference>
<dbReference type="HAMAP" id="MF_00379">
    <property type="entry name" value="GTPase_MnmE"/>
    <property type="match status" value="1"/>
</dbReference>
<dbReference type="InterPro" id="IPR031168">
    <property type="entry name" value="G_TrmE"/>
</dbReference>
<dbReference type="InterPro" id="IPR006073">
    <property type="entry name" value="GTP-bd"/>
</dbReference>
<dbReference type="InterPro" id="IPR018948">
    <property type="entry name" value="GTP-bd_TrmE_N"/>
</dbReference>
<dbReference type="InterPro" id="IPR004520">
    <property type="entry name" value="GTPase_MnmE"/>
</dbReference>
<dbReference type="InterPro" id="IPR027368">
    <property type="entry name" value="MnmE_dom2"/>
</dbReference>
<dbReference type="InterPro" id="IPR025867">
    <property type="entry name" value="MnmE_helical"/>
</dbReference>
<dbReference type="InterPro" id="IPR027417">
    <property type="entry name" value="P-loop_NTPase"/>
</dbReference>
<dbReference type="InterPro" id="IPR005225">
    <property type="entry name" value="Small_GTP-bd"/>
</dbReference>
<dbReference type="InterPro" id="IPR027266">
    <property type="entry name" value="TrmE/GcvT_dom1"/>
</dbReference>
<dbReference type="NCBIfam" id="TIGR00450">
    <property type="entry name" value="mnmE_trmE_thdF"/>
    <property type="match status" value="1"/>
</dbReference>
<dbReference type="NCBIfam" id="NF003661">
    <property type="entry name" value="PRK05291.1-3"/>
    <property type="match status" value="1"/>
</dbReference>
<dbReference type="NCBIfam" id="TIGR00231">
    <property type="entry name" value="small_GTP"/>
    <property type="match status" value="1"/>
</dbReference>
<dbReference type="PANTHER" id="PTHR42714">
    <property type="entry name" value="TRNA MODIFICATION GTPASE GTPBP3"/>
    <property type="match status" value="1"/>
</dbReference>
<dbReference type="PANTHER" id="PTHR42714:SF2">
    <property type="entry name" value="TRNA MODIFICATION GTPASE GTPBP3, MITOCHONDRIAL"/>
    <property type="match status" value="1"/>
</dbReference>
<dbReference type="Pfam" id="PF01926">
    <property type="entry name" value="MMR_HSR1"/>
    <property type="match status" value="1"/>
</dbReference>
<dbReference type="Pfam" id="PF12631">
    <property type="entry name" value="MnmE_helical"/>
    <property type="match status" value="1"/>
</dbReference>
<dbReference type="Pfam" id="PF10396">
    <property type="entry name" value="TrmE_N"/>
    <property type="match status" value="1"/>
</dbReference>
<dbReference type="SUPFAM" id="SSF52540">
    <property type="entry name" value="P-loop containing nucleoside triphosphate hydrolases"/>
    <property type="match status" value="1"/>
</dbReference>
<dbReference type="SUPFAM" id="SSF116878">
    <property type="entry name" value="TrmE connector domain"/>
    <property type="match status" value="1"/>
</dbReference>
<dbReference type="PROSITE" id="PS51709">
    <property type="entry name" value="G_TRME"/>
    <property type="match status" value="1"/>
</dbReference>
<name>MNME_STRP3</name>
<protein>
    <recommendedName>
        <fullName evidence="1">tRNA modification GTPase MnmE</fullName>
        <ecNumber evidence="1">3.6.-.-</ecNumber>
    </recommendedName>
</protein>
<organism>
    <name type="scientific">Streptococcus pyogenes serotype M3 (strain ATCC BAA-595 / MGAS315)</name>
    <dbReference type="NCBI Taxonomy" id="198466"/>
    <lineage>
        <taxon>Bacteria</taxon>
        <taxon>Bacillati</taxon>
        <taxon>Bacillota</taxon>
        <taxon>Bacilli</taxon>
        <taxon>Lactobacillales</taxon>
        <taxon>Streptococcaceae</taxon>
        <taxon>Streptococcus</taxon>
    </lineage>
</organism>
<gene>
    <name evidence="1" type="primary">mnmE</name>
    <name evidence="1" type="synonym">thdF</name>
    <name evidence="1" type="synonym">trmE</name>
    <name type="ordered locus">SpyM3_0752</name>
</gene>
<reference key="1">
    <citation type="journal article" date="2002" name="Proc. Natl. Acad. Sci. U.S.A.">
        <title>Genome sequence of a serotype M3 strain of group A Streptococcus: phage-encoded toxins, the high-virulence phenotype, and clone emergence.</title>
        <authorList>
            <person name="Beres S.B."/>
            <person name="Sylva G.L."/>
            <person name="Barbian K.D."/>
            <person name="Lei B."/>
            <person name="Hoff J.S."/>
            <person name="Mammarella N.D."/>
            <person name="Liu M.-Y."/>
            <person name="Smoot J.C."/>
            <person name="Porcella S.F."/>
            <person name="Parkins L.D."/>
            <person name="Campbell D.S."/>
            <person name="Smith T.M."/>
            <person name="McCormick J.K."/>
            <person name="Leung D.Y.M."/>
            <person name="Schlievert P.M."/>
            <person name="Musser J.M."/>
        </authorList>
    </citation>
    <scope>NUCLEOTIDE SEQUENCE [LARGE SCALE GENOMIC DNA]</scope>
    <source>
        <strain>ATCC BAA-595 / MGAS315</strain>
    </source>
</reference>
<sequence length="458" mass="50567">MSITKEFDTITAISTPLGEGAIGIVRLSGTDALAIAQSVFKGKNLEQVASHTINYGHIIDPKTGTIIDEVMVSVMLAPKTFTRENVVEINTHGGIAVTNEILQLLIRQGARMAEPGEFTKRAFLNGRVDLTQAEAVMDIIRAKTDKAMTIAVKQLDGSLSQLINDTRQEILNTLAQVEVNIDYPEYDDVEEMTTALLREKTQEFQSLLENLLRTAKRGKILREGLSTAIIGRPNVGKSSLLNNLLREDKAIVTDIAGTTRDVIEEYVNIKGVPLKLVDTAGIRETDDLVEQIGVERSKKALQEADLVLLVLNASEKLTDQDRALLNLSQDSNRIILLNKTDLEQKIELEQLPDDYIPISVLTNQNINLIEDRINQLFFDNAGLVEQDATYLSNARHISLIEKTVQSLEAVNDGLALGMPVDLLQVDLTRTWEILGEITGDAAPDELITQLFSQFCLGK</sequence>
<accession>P0DG22</accession>
<accession>Q8K7L5</accession>
<feature type="chain" id="PRO_0000188932" description="tRNA modification GTPase MnmE">
    <location>
        <begin position="1"/>
        <end position="458"/>
    </location>
</feature>
<feature type="domain" description="TrmE-type G">
    <location>
        <begin position="224"/>
        <end position="378"/>
    </location>
</feature>
<feature type="binding site" evidence="1">
    <location>
        <position position="26"/>
    </location>
    <ligand>
        <name>(6S)-5-formyl-5,6,7,8-tetrahydrofolate</name>
        <dbReference type="ChEBI" id="CHEBI:57457"/>
    </ligand>
</feature>
<feature type="binding site" evidence="1">
    <location>
        <position position="88"/>
    </location>
    <ligand>
        <name>(6S)-5-formyl-5,6,7,8-tetrahydrofolate</name>
        <dbReference type="ChEBI" id="CHEBI:57457"/>
    </ligand>
</feature>
<feature type="binding site" evidence="1">
    <location>
        <position position="127"/>
    </location>
    <ligand>
        <name>(6S)-5-formyl-5,6,7,8-tetrahydrofolate</name>
        <dbReference type="ChEBI" id="CHEBI:57457"/>
    </ligand>
</feature>
<feature type="binding site" evidence="1">
    <location>
        <begin position="234"/>
        <end position="239"/>
    </location>
    <ligand>
        <name>GTP</name>
        <dbReference type="ChEBI" id="CHEBI:37565"/>
    </ligand>
</feature>
<feature type="binding site" evidence="1">
    <location>
        <position position="234"/>
    </location>
    <ligand>
        <name>K(+)</name>
        <dbReference type="ChEBI" id="CHEBI:29103"/>
    </ligand>
</feature>
<feature type="binding site" evidence="1">
    <location>
        <position position="238"/>
    </location>
    <ligand>
        <name>Mg(2+)</name>
        <dbReference type="ChEBI" id="CHEBI:18420"/>
    </ligand>
</feature>
<feature type="binding site" evidence="1">
    <location>
        <begin position="253"/>
        <end position="259"/>
    </location>
    <ligand>
        <name>GTP</name>
        <dbReference type="ChEBI" id="CHEBI:37565"/>
    </ligand>
</feature>
<feature type="binding site" evidence="1">
    <location>
        <position position="253"/>
    </location>
    <ligand>
        <name>K(+)</name>
        <dbReference type="ChEBI" id="CHEBI:29103"/>
    </ligand>
</feature>
<feature type="binding site" evidence="1">
    <location>
        <position position="255"/>
    </location>
    <ligand>
        <name>K(+)</name>
        <dbReference type="ChEBI" id="CHEBI:29103"/>
    </ligand>
</feature>
<feature type="binding site" evidence="1">
    <location>
        <position position="258"/>
    </location>
    <ligand>
        <name>K(+)</name>
        <dbReference type="ChEBI" id="CHEBI:29103"/>
    </ligand>
</feature>
<feature type="binding site" evidence="1">
    <location>
        <position position="259"/>
    </location>
    <ligand>
        <name>Mg(2+)</name>
        <dbReference type="ChEBI" id="CHEBI:18420"/>
    </ligand>
</feature>
<feature type="binding site" evidence="1">
    <location>
        <begin position="278"/>
        <end position="281"/>
    </location>
    <ligand>
        <name>GTP</name>
        <dbReference type="ChEBI" id="CHEBI:37565"/>
    </ligand>
</feature>
<feature type="binding site" evidence="1">
    <location>
        <position position="458"/>
    </location>
    <ligand>
        <name>(6S)-5-formyl-5,6,7,8-tetrahydrofolate</name>
        <dbReference type="ChEBI" id="CHEBI:57457"/>
    </ligand>
</feature>
<comment type="function">
    <text evidence="1">Exhibits a very high intrinsic GTPase hydrolysis rate. Involved in the addition of a carboxymethylaminomethyl (cmnm) group at the wobble position (U34) of certain tRNAs, forming tRNA-cmnm(5)s(2)U34.</text>
</comment>
<comment type="cofactor">
    <cofactor evidence="1">
        <name>K(+)</name>
        <dbReference type="ChEBI" id="CHEBI:29103"/>
    </cofactor>
    <text evidence="1">Binds 1 potassium ion per subunit.</text>
</comment>
<comment type="subunit">
    <text evidence="1">Homodimer. Heterotetramer of two MnmE and two MnmG subunits.</text>
</comment>
<comment type="subcellular location">
    <subcellularLocation>
        <location evidence="1">Cytoplasm</location>
    </subcellularLocation>
</comment>
<comment type="similarity">
    <text evidence="1">Belongs to the TRAFAC class TrmE-Era-EngA-EngB-Septin-like GTPase superfamily. TrmE GTPase family.</text>
</comment>
<keyword id="KW-0963">Cytoplasm</keyword>
<keyword id="KW-0342">GTP-binding</keyword>
<keyword id="KW-0378">Hydrolase</keyword>
<keyword id="KW-0460">Magnesium</keyword>
<keyword id="KW-0479">Metal-binding</keyword>
<keyword id="KW-0547">Nucleotide-binding</keyword>
<keyword id="KW-0630">Potassium</keyword>
<keyword id="KW-0819">tRNA processing</keyword>